<feature type="chain" id="PRO_0000165423" description="S-adenosylmethionine:tRNA ribosyltransferase-isomerase">
    <location>
        <begin position="1"/>
        <end position="371"/>
    </location>
</feature>
<dbReference type="EC" id="2.4.99.17" evidence="1"/>
<dbReference type="EMBL" id="BX548175">
    <property type="protein sequence ID" value="CAE20398.1"/>
    <property type="molecule type" value="Genomic_DNA"/>
</dbReference>
<dbReference type="RefSeq" id="WP_011129602.1">
    <property type="nucleotide sequence ID" value="NC_005071.1"/>
</dbReference>
<dbReference type="SMR" id="Q7V8V2"/>
<dbReference type="KEGG" id="pmt:PMT_0223"/>
<dbReference type="eggNOG" id="COG0809">
    <property type="taxonomic scope" value="Bacteria"/>
</dbReference>
<dbReference type="HOGENOM" id="CLU_039110_1_0_3"/>
<dbReference type="OrthoDB" id="9805933at2"/>
<dbReference type="UniPathway" id="UPA00392"/>
<dbReference type="Proteomes" id="UP000001423">
    <property type="component" value="Chromosome"/>
</dbReference>
<dbReference type="GO" id="GO:0005737">
    <property type="term" value="C:cytoplasm"/>
    <property type="evidence" value="ECO:0007669"/>
    <property type="project" value="UniProtKB-SubCell"/>
</dbReference>
<dbReference type="GO" id="GO:0051075">
    <property type="term" value="F:S-adenosylmethionine:tRNA ribosyltransferase-isomerase activity"/>
    <property type="evidence" value="ECO:0007669"/>
    <property type="project" value="UniProtKB-EC"/>
</dbReference>
<dbReference type="GO" id="GO:0008616">
    <property type="term" value="P:queuosine biosynthetic process"/>
    <property type="evidence" value="ECO:0007669"/>
    <property type="project" value="UniProtKB-UniRule"/>
</dbReference>
<dbReference type="GO" id="GO:0002099">
    <property type="term" value="P:tRNA wobble guanine modification"/>
    <property type="evidence" value="ECO:0007669"/>
    <property type="project" value="TreeGrafter"/>
</dbReference>
<dbReference type="Gene3D" id="2.40.10.240">
    <property type="entry name" value="QueA-like"/>
    <property type="match status" value="1"/>
</dbReference>
<dbReference type="Gene3D" id="3.40.1780.10">
    <property type="entry name" value="QueA-like"/>
    <property type="match status" value="2"/>
</dbReference>
<dbReference type="HAMAP" id="MF_00113">
    <property type="entry name" value="QueA"/>
    <property type="match status" value="1"/>
</dbReference>
<dbReference type="InterPro" id="IPR003699">
    <property type="entry name" value="QueA"/>
</dbReference>
<dbReference type="InterPro" id="IPR042118">
    <property type="entry name" value="QueA_dom1"/>
</dbReference>
<dbReference type="InterPro" id="IPR042119">
    <property type="entry name" value="QueA_dom2"/>
</dbReference>
<dbReference type="InterPro" id="IPR036100">
    <property type="entry name" value="QueA_sf"/>
</dbReference>
<dbReference type="NCBIfam" id="NF001140">
    <property type="entry name" value="PRK00147.1"/>
    <property type="match status" value="1"/>
</dbReference>
<dbReference type="NCBIfam" id="TIGR00113">
    <property type="entry name" value="queA"/>
    <property type="match status" value="1"/>
</dbReference>
<dbReference type="PANTHER" id="PTHR30307">
    <property type="entry name" value="S-ADENOSYLMETHIONINE:TRNA RIBOSYLTRANSFERASE-ISOMERASE"/>
    <property type="match status" value="1"/>
</dbReference>
<dbReference type="PANTHER" id="PTHR30307:SF0">
    <property type="entry name" value="S-ADENOSYLMETHIONINE:TRNA RIBOSYLTRANSFERASE-ISOMERASE"/>
    <property type="match status" value="1"/>
</dbReference>
<dbReference type="Pfam" id="PF02547">
    <property type="entry name" value="Queuosine_synth"/>
    <property type="match status" value="1"/>
</dbReference>
<dbReference type="SUPFAM" id="SSF111337">
    <property type="entry name" value="QueA-like"/>
    <property type="match status" value="1"/>
</dbReference>
<proteinExistence type="inferred from homology"/>
<sequence length="371" mass="41020">MVLDPRDSLLSSYDYPLDPERIAQLPVEPRHSARLLIVQPLGMKPPIARHAEVWDWQEELRAGDLLVINDTRVLKARLRVRRSGGGLAELLVLEPRGEGCWLCLGRPAKRLRPGDQLWLEALGEEPIALQVISKDSASGGRVVQFPSHYANAEQLELLLERYGEVPLPPYIQRHDPSDSERYQTRYASRPGAVAAPTAGLHLSDELLEALKQRGVMLTSVTLHVGLGTFRPVETEDLSHLQLHSEWVEVRDDVVEAVMACRARAGRVIAVGTTSVRALEGAALAGGGFLQSFCGPVDLVIQPGYRFAVVDGLLTNFHLPKSSLLLLVSAMVGRERLLALYAEAIEHQYRFFSYGDAMWIDPEAVLPAARPC</sequence>
<organism>
    <name type="scientific">Prochlorococcus marinus (strain MIT 9313)</name>
    <dbReference type="NCBI Taxonomy" id="74547"/>
    <lineage>
        <taxon>Bacteria</taxon>
        <taxon>Bacillati</taxon>
        <taxon>Cyanobacteriota</taxon>
        <taxon>Cyanophyceae</taxon>
        <taxon>Synechococcales</taxon>
        <taxon>Prochlorococcaceae</taxon>
        <taxon>Prochlorococcus</taxon>
    </lineage>
</organism>
<comment type="function">
    <text evidence="1">Transfers and isomerizes the ribose moiety from AdoMet to the 7-aminomethyl group of 7-deazaguanine (preQ1-tRNA) to give epoxyqueuosine (oQ-tRNA).</text>
</comment>
<comment type="catalytic activity">
    <reaction evidence="1">
        <text>7-aminomethyl-7-carbaguanosine(34) in tRNA + S-adenosyl-L-methionine = epoxyqueuosine(34) in tRNA + adenine + L-methionine + 2 H(+)</text>
        <dbReference type="Rhea" id="RHEA:32155"/>
        <dbReference type="Rhea" id="RHEA-COMP:10342"/>
        <dbReference type="Rhea" id="RHEA-COMP:18582"/>
        <dbReference type="ChEBI" id="CHEBI:15378"/>
        <dbReference type="ChEBI" id="CHEBI:16708"/>
        <dbReference type="ChEBI" id="CHEBI:57844"/>
        <dbReference type="ChEBI" id="CHEBI:59789"/>
        <dbReference type="ChEBI" id="CHEBI:82833"/>
        <dbReference type="ChEBI" id="CHEBI:194443"/>
        <dbReference type="EC" id="2.4.99.17"/>
    </reaction>
</comment>
<comment type="pathway">
    <text evidence="1">tRNA modification; tRNA-queuosine biosynthesis.</text>
</comment>
<comment type="subunit">
    <text evidence="1">Monomer.</text>
</comment>
<comment type="subcellular location">
    <subcellularLocation>
        <location evidence="1">Cytoplasm</location>
    </subcellularLocation>
</comment>
<comment type="similarity">
    <text evidence="1">Belongs to the QueA family.</text>
</comment>
<keyword id="KW-0963">Cytoplasm</keyword>
<keyword id="KW-0671">Queuosine biosynthesis</keyword>
<keyword id="KW-1185">Reference proteome</keyword>
<keyword id="KW-0949">S-adenosyl-L-methionine</keyword>
<keyword id="KW-0808">Transferase</keyword>
<accession>Q7V8V2</accession>
<protein>
    <recommendedName>
        <fullName evidence="1">S-adenosylmethionine:tRNA ribosyltransferase-isomerase</fullName>
        <ecNumber evidence="1">2.4.99.17</ecNumber>
    </recommendedName>
    <alternativeName>
        <fullName evidence="1">Queuosine biosynthesis protein QueA</fullName>
    </alternativeName>
</protein>
<reference key="1">
    <citation type="journal article" date="2003" name="Nature">
        <title>Genome divergence in two Prochlorococcus ecotypes reflects oceanic niche differentiation.</title>
        <authorList>
            <person name="Rocap G."/>
            <person name="Larimer F.W."/>
            <person name="Lamerdin J.E."/>
            <person name="Malfatti S."/>
            <person name="Chain P."/>
            <person name="Ahlgren N.A."/>
            <person name="Arellano A."/>
            <person name="Coleman M."/>
            <person name="Hauser L."/>
            <person name="Hess W.R."/>
            <person name="Johnson Z.I."/>
            <person name="Land M.L."/>
            <person name="Lindell D."/>
            <person name="Post A.F."/>
            <person name="Regala W."/>
            <person name="Shah M."/>
            <person name="Shaw S.L."/>
            <person name="Steglich C."/>
            <person name="Sullivan M.B."/>
            <person name="Ting C.S."/>
            <person name="Tolonen A."/>
            <person name="Webb E.A."/>
            <person name="Zinser E.R."/>
            <person name="Chisholm S.W."/>
        </authorList>
    </citation>
    <scope>NUCLEOTIDE SEQUENCE [LARGE SCALE GENOMIC DNA]</scope>
    <source>
        <strain>MIT 9313</strain>
    </source>
</reference>
<gene>
    <name evidence="1" type="primary">queA</name>
    <name type="ordered locus">PMT_0223</name>
</gene>
<evidence type="ECO:0000255" key="1">
    <source>
        <dbReference type="HAMAP-Rule" id="MF_00113"/>
    </source>
</evidence>
<name>QUEA_PROMM</name>